<dbReference type="GO" id="GO:0005576">
    <property type="term" value="C:extracellular region"/>
    <property type="evidence" value="ECO:0007669"/>
    <property type="project" value="UniProtKB-SubCell"/>
</dbReference>
<dbReference type="GO" id="GO:0035792">
    <property type="term" value="C:host cell postsynaptic membrane"/>
    <property type="evidence" value="ECO:0007669"/>
    <property type="project" value="UniProtKB-KW"/>
</dbReference>
<dbReference type="GO" id="GO:0030550">
    <property type="term" value="F:acetylcholine receptor inhibitor activity"/>
    <property type="evidence" value="ECO:0007669"/>
    <property type="project" value="UniProtKB-KW"/>
</dbReference>
<dbReference type="GO" id="GO:0099106">
    <property type="term" value="F:ion channel regulator activity"/>
    <property type="evidence" value="ECO:0007669"/>
    <property type="project" value="UniProtKB-KW"/>
</dbReference>
<dbReference type="GO" id="GO:0090729">
    <property type="term" value="F:toxin activity"/>
    <property type="evidence" value="ECO:0007669"/>
    <property type="project" value="UniProtKB-KW"/>
</dbReference>
<dbReference type="InterPro" id="IPR009958">
    <property type="entry name" value="Conotoxin_a-typ"/>
</dbReference>
<dbReference type="Pfam" id="PF07365">
    <property type="entry name" value="Toxin_8"/>
    <property type="match status" value="1"/>
</dbReference>
<feature type="signal peptide" evidence="3">
    <location>
        <begin position="1"/>
        <end position="21"/>
    </location>
</feature>
<feature type="propeptide" id="PRO_0000251232" evidence="1">
    <location>
        <begin position="22"/>
        <end position="48"/>
    </location>
</feature>
<feature type="peptide" id="PRO_0000251233" description="Alpha-conotoxin BnIA" evidence="4">
    <location>
        <begin position="49"/>
        <end position="64"/>
    </location>
</feature>
<feature type="region of interest" description="Ser-Xaa-Pro motif, crucial for potent interaction with nAChR" evidence="2">
    <location>
        <begin position="52"/>
        <end position="54"/>
    </location>
</feature>
<feature type="modified residue" description="Cysteine amide" evidence="4">
    <location>
        <position position="64"/>
    </location>
</feature>
<feature type="disulfide bond" evidence="4">
    <location>
        <begin position="50"/>
        <end position="56"/>
    </location>
</feature>
<feature type="disulfide bond" evidence="4">
    <location>
        <begin position="51"/>
        <end position="64"/>
    </location>
</feature>
<name>CA11_CONBN</name>
<proteinExistence type="evidence at protein level"/>
<protein>
    <recommendedName>
        <fullName evidence="6">Alpha-conotoxin BnIA</fullName>
        <shortName evidence="6">Alpha-BnIA</shortName>
    </recommendedName>
    <alternativeName>
        <fullName evidence="5">Alpha-conotoxin-like Bn1.1</fullName>
    </alternativeName>
</protein>
<evidence type="ECO:0000250" key="1"/>
<evidence type="ECO:0000250" key="2">
    <source>
        <dbReference type="UniProtKB" id="P56636"/>
    </source>
</evidence>
<evidence type="ECO:0000255" key="3"/>
<evidence type="ECO:0000269" key="4">
    <source>
    </source>
</evidence>
<evidence type="ECO:0000303" key="5">
    <source>
    </source>
</evidence>
<evidence type="ECO:0000303" key="6">
    <source>
    </source>
</evidence>
<evidence type="ECO:0000305" key="7"/>
<evidence type="ECO:0000305" key="8">
    <source>
    </source>
</evidence>
<accession>P0CE73</accession>
<accession>P0C1Y1</accession>
<comment type="function">
    <text evidence="4">Alpha-conotoxins act on postsynaptic membranes, they bind to the nicotinic acetylcholine receptors (nAChR) and thus inhibit them. This toxin inhibits acetylcholine-evoked currents reversibly in oocytes expressing the human alpha-7/CHRNA7 nAChR, and blocks nerve-evoked skeletal muscle contractions in isolated mouse neuromuscular preparations, but with a very low affinity.</text>
</comment>
<comment type="subcellular location">
    <subcellularLocation>
        <location evidence="4">Secreted</location>
    </subcellularLocation>
</comment>
<comment type="tissue specificity">
    <text evidence="8">Expressed by the venom duct.</text>
</comment>
<comment type="domain">
    <text evidence="7">The cysteine framework is I (CC-C-C). Alpha4/7 pattern.</text>
</comment>
<comment type="mass spectrometry">
    <text>Monoisotopic mass.</text>
</comment>
<comment type="similarity">
    <text evidence="7">Belongs to the conotoxin A superfamily.</text>
</comment>
<keyword id="KW-0008">Acetylcholine receptor inhibiting toxin</keyword>
<keyword id="KW-0027">Amidation</keyword>
<keyword id="KW-0903">Direct protein sequencing</keyword>
<keyword id="KW-1015">Disulfide bond</keyword>
<keyword id="KW-0872">Ion channel impairing toxin</keyword>
<keyword id="KW-0528">Neurotoxin</keyword>
<keyword id="KW-0629">Postsynaptic neurotoxin</keyword>
<keyword id="KW-0964">Secreted</keyword>
<keyword id="KW-0732">Signal</keyword>
<keyword id="KW-0800">Toxin</keyword>
<sequence>MGMRMMFTMFLLVVLATTVVSFASDRASDGRNAAAKDKASDLVALTVKGCCSHPACSVNNPDICG</sequence>
<organism>
    <name type="scientific">Conus bandanus</name>
    <name type="common">Banded marble cone</name>
    <dbReference type="NCBI Taxonomy" id="72279"/>
    <lineage>
        <taxon>Eukaryota</taxon>
        <taxon>Metazoa</taxon>
        <taxon>Spiralia</taxon>
        <taxon>Lophotrochozoa</taxon>
        <taxon>Mollusca</taxon>
        <taxon>Gastropoda</taxon>
        <taxon>Caenogastropoda</taxon>
        <taxon>Neogastropoda</taxon>
        <taxon>Conoidea</taxon>
        <taxon>Conidae</taxon>
        <taxon>Conus</taxon>
    </lineage>
</organism>
<reference key="1">
    <citation type="journal article" date="2004" name="J. Biol. Chem.">
        <title>The A-superfamily of conotoxins: structural and functional divergence.</title>
        <authorList>
            <person name="Santos A.D."/>
            <person name="McIntosh J.M."/>
            <person name="Hillyard D.R."/>
            <person name="Cruz L.J."/>
            <person name="Olivera B.M."/>
        </authorList>
    </citation>
    <scope>NUCLEOTIDE SEQUENCE [MRNA]</scope>
    <source>
        <tissue>Venom duct</tissue>
    </source>
</reference>
<reference key="2">
    <citation type="journal article" date="2014" name="Toxicon">
        <title>Isolation, purification and functional characterization of alpha-BnIA from Conus bandanus venom.</title>
        <authorList>
            <person name="Nguyen B."/>
            <person name="Le Caer J.P."/>
            <person name="Araoz R."/>
            <person name="Thai R."/>
            <person name="Lamthanh H."/>
            <person name="Benoit E."/>
            <person name="Molgo J."/>
        </authorList>
    </citation>
    <scope>PROTEIN SEQUENCE OF 49-64</scope>
    <scope>AMIDATION AT CYS-64</scope>
    <scope>SUBCELLULAR LOCATION</scope>
    <scope>DISULFIDE BOND</scope>
    <scope>FUNCTION</scope>
    <scope>MASS SPECTROMETRY</scope>
    <source>
        <tissue>Venom</tissue>
    </source>
</reference>